<evidence type="ECO:0000250" key="1">
    <source>
        <dbReference type="UniProtKB" id="P16444"/>
    </source>
</evidence>
<evidence type="ECO:0000250" key="2">
    <source>
        <dbReference type="UniProtKB" id="Q9DA79"/>
    </source>
</evidence>
<evidence type="ECO:0000250" key="3">
    <source>
        <dbReference type="UniProtKB" id="Q9H4B8"/>
    </source>
</evidence>
<evidence type="ECO:0000255" key="4"/>
<evidence type="ECO:0000255" key="5">
    <source>
        <dbReference type="PROSITE-ProRule" id="PRU10073"/>
    </source>
</evidence>
<evidence type="ECO:0000256" key="6">
    <source>
        <dbReference type="SAM" id="MobiDB-lite"/>
    </source>
</evidence>
<evidence type="ECO:0000305" key="7"/>
<reference key="1">
    <citation type="submission" date="2005-06" db="EMBL/GenBank/DDBJ databases">
        <title>DNA sequences of macaque genes expressed in brain or testis and its evolutionary implications.</title>
        <authorList>
            <consortium name="International consortium for macaque cDNA sequencing and analysis"/>
        </authorList>
    </citation>
    <scope>NUCLEOTIDE SEQUENCE [LARGE SCALE MRNA]</scope>
    <source>
        <tissue>Testis</tissue>
    </source>
</reference>
<proteinExistence type="evidence at transcript level"/>
<organism>
    <name type="scientific">Macaca fascicularis</name>
    <name type="common">Crab-eating macaque</name>
    <name type="synonym">Cynomolgus monkey</name>
    <dbReference type="NCBI Taxonomy" id="9541"/>
    <lineage>
        <taxon>Eukaryota</taxon>
        <taxon>Metazoa</taxon>
        <taxon>Chordata</taxon>
        <taxon>Craniata</taxon>
        <taxon>Vertebrata</taxon>
        <taxon>Euteleostomi</taxon>
        <taxon>Mammalia</taxon>
        <taxon>Eutheria</taxon>
        <taxon>Euarchontoglires</taxon>
        <taxon>Primates</taxon>
        <taxon>Haplorrhini</taxon>
        <taxon>Catarrhini</taxon>
        <taxon>Cercopithecidae</taxon>
        <taxon>Cercopithecinae</taxon>
        <taxon>Macaca</taxon>
    </lineage>
</organism>
<sequence length="488" mass="53868">MQPTGHEGSRALSRRHLRRLLLLLLLLLLRQPVTRGETTTGAPRALSTLGFPSPFTTPGVPSTLTTPGLTTPGTTKTLDLRSRAQALMRDFPLVDGHNDLPQVLRQRYKNVLQDVNLRNFSHSQTSLDRLRDGLVGAQFWSASVSCQTQDQTAVRLALEQIDLIRRMCASYSELELVTSAEGLNSSQKLACLIGVEGGHSLDSSLSVLRSFYVLGVRYLTLTFTCNTPWAESSTKFTHHMYTNVSGLTSFGEKVVEELNRLGMMIDLSYASDTLMRRVLEVSRAPVIFSHSAARAVCDNSLNVPDDILQLLKKNGGIVMVTLSMGVLQCNLLANVSTVADHFDHIRAVIGSEFIGIGGNYDGAGRFPQGLEDVSTYPVLIEELLSRSWSEKELQGVLRGNLLRVFRQAEKVREESRAQSPMEAEFPYGQLSTSCHSHLVPQNGHQATHLEVTKWPTNRVPWRSSDASPYLLPGLVAAATFPTVIQWLC</sequence>
<keyword id="KW-1015">Disulfide bond</keyword>
<keyword id="KW-0325">Glycoprotein</keyword>
<keyword id="KW-0336">GPI-anchor</keyword>
<keyword id="KW-0449">Lipoprotein</keyword>
<keyword id="KW-0469">Meiosis</keyword>
<keyword id="KW-0472">Membrane</keyword>
<keyword id="KW-1185">Reference proteome</keyword>
<keyword id="KW-0732">Signal</keyword>
<comment type="function">
    <text evidence="3">Lacks dipeptidase activity and is unable to hydrolyze cystinyl-bis-glycine, leukotriene D4 and the beta-lactam antibiotic imipenem (By similarity). The absence of activity may be due to the inability of asparagine (instead of aspartate found in DPEP1/2) at position 359 to function as the acid/base catalyst and activate the nucleophilic water/hydroxide (By similarity). A tyrosine (instead of histidine) at position 269 reduces affinity for the beta zinc and may cause substrate steric hindrance (By similarity).</text>
</comment>
<comment type="subunit">
    <text evidence="2 5">Homodimer; disulfide-linked (By similarity). Interacts with TEX101; co-localized on the cell surface of spermatocytes, spermatids, and testicular spermatozoa, co-localized only in cytoplasmic droplets of caput and corpus epididymal sperm (By similarity).</text>
</comment>
<comment type="subcellular location">
    <subcellularLocation>
        <location evidence="2">Membrane</location>
        <topology evidence="2">Lipid-anchor</topology>
        <topology evidence="2">GPI-anchor</topology>
    </subcellularLocation>
</comment>
<comment type="similarity">
    <text evidence="5">Belongs to the metallo-dependent hydrolases superfamily. Peptidase M19 family.</text>
</comment>
<comment type="sequence caution" evidence="7">
    <conflict type="erroneous initiation">
        <sequence resource="EMBL-CDS" id="BAE00900"/>
    </conflict>
    <text>Extended N-terminus.</text>
</comment>
<accession>Q4R7M2</accession>
<name>DPEP3_MACFA</name>
<feature type="signal peptide" evidence="4">
    <location>
        <begin position="1"/>
        <end position="35"/>
    </location>
</feature>
<feature type="chain" id="PRO_0000231611" description="Dipeptidase 3">
    <location>
        <begin position="36"/>
        <end position="463"/>
    </location>
</feature>
<feature type="propeptide" id="PRO_0000231612" description="Removed in mature form" evidence="1">
    <location>
        <begin position="464"/>
        <end position="488"/>
    </location>
</feature>
<feature type="region of interest" description="Disordered" evidence="6">
    <location>
        <begin position="36"/>
        <end position="67"/>
    </location>
</feature>
<feature type="compositionally biased region" description="Low complexity" evidence="6">
    <location>
        <begin position="56"/>
        <end position="67"/>
    </location>
</feature>
<feature type="lipid moiety-binding region" description="GPI-anchor amidated serine" evidence="4">
    <location>
        <position position="463"/>
    </location>
</feature>
<feature type="glycosylation site" description="N-linked (GlcNAc...) asparagine" evidence="4">
    <location>
        <position position="334"/>
    </location>
</feature>
<feature type="disulfide bond" evidence="5">
    <location>
        <begin position="146"/>
        <end position="225"/>
    </location>
</feature>
<feature type="disulfide bond" evidence="5">
    <location>
        <begin position="297"/>
        <end position="329"/>
    </location>
</feature>
<feature type="disulfide bond" description="Interchain" evidence="5">
    <location>
        <position position="434"/>
    </location>
</feature>
<protein>
    <recommendedName>
        <fullName>Dipeptidase 3</fullName>
    </recommendedName>
</protein>
<gene>
    <name type="primary">DPEP3</name>
    <name type="ORF">QtsA-14814</name>
</gene>
<dbReference type="EMBL" id="AB168793">
    <property type="protein sequence ID" value="BAE00900.1"/>
    <property type="status" value="ALT_INIT"/>
    <property type="molecule type" value="mRNA"/>
</dbReference>
<dbReference type="RefSeq" id="NP_001306334.1">
    <property type="nucleotide sequence ID" value="NM_001319405.1"/>
</dbReference>
<dbReference type="SMR" id="Q4R7M2"/>
<dbReference type="STRING" id="9541.ENSMFAP00000032169"/>
<dbReference type="MEROPS" id="M19.004"/>
<dbReference type="GlyCosmos" id="Q4R7M2">
    <property type="glycosylation" value="1 site, No reported glycans"/>
</dbReference>
<dbReference type="eggNOG" id="KOG4127">
    <property type="taxonomic scope" value="Eukaryota"/>
</dbReference>
<dbReference type="Proteomes" id="UP000233100">
    <property type="component" value="Unplaced"/>
</dbReference>
<dbReference type="GO" id="GO:0001669">
    <property type="term" value="C:acrosomal vesicle"/>
    <property type="evidence" value="ECO:0000250"/>
    <property type="project" value="UniProtKB"/>
</dbReference>
<dbReference type="GO" id="GO:0016020">
    <property type="term" value="C:membrane"/>
    <property type="evidence" value="ECO:0000250"/>
    <property type="project" value="UniProtKB"/>
</dbReference>
<dbReference type="GO" id="GO:0005886">
    <property type="term" value="C:plasma membrane"/>
    <property type="evidence" value="ECO:0000250"/>
    <property type="project" value="UniProtKB"/>
</dbReference>
<dbReference type="GO" id="GO:0098552">
    <property type="term" value="C:side of membrane"/>
    <property type="evidence" value="ECO:0007669"/>
    <property type="project" value="UniProtKB-KW"/>
</dbReference>
<dbReference type="GO" id="GO:0016805">
    <property type="term" value="F:dipeptidase activity"/>
    <property type="evidence" value="ECO:0000250"/>
    <property type="project" value="UniProtKB"/>
</dbReference>
<dbReference type="GO" id="GO:0070573">
    <property type="term" value="F:metallodipeptidase activity"/>
    <property type="evidence" value="ECO:0007669"/>
    <property type="project" value="InterPro"/>
</dbReference>
<dbReference type="GO" id="GO:0051321">
    <property type="term" value="P:meiotic cell cycle"/>
    <property type="evidence" value="ECO:0007669"/>
    <property type="project" value="UniProtKB-KW"/>
</dbReference>
<dbReference type="GO" id="GO:0006508">
    <property type="term" value="P:proteolysis"/>
    <property type="evidence" value="ECO:0007669"/>
    <property type="project" value="InterPro"/>
</dbReference>
<dbReference type="CDD" id="cd01301">
    <property type="entry name" value="rDP_like"/>
    <property type="match status" value="1"/>
</dbReference>
<dbReference type="FunFam" id="3.20.20.140:FF:000030">
    <property type="entry name" value="Dipeptidase"/>
    <property type="match status" value="1"/>
</dbReference>
<dbReference type="Gene3D" id="3.20.20.140">
    <property type="entry name" value="Metal-dependent hydrolases"/>
    <property type="match status" value="1"/>
</dbReference>
<dbReference type="InterPro" id="IPR000180">
    <property type="entry name" value="Dipep_AS"/>
</dbReference>
<dbReference type="InterPro" id="IPR032466">
    <property type="entry name" value="Metal_Hydrolase"/>
</dbReference>
<dbReference type="InterPro" id="IPR008257">
    <property type="entry name" value="Pept_M19"/>
</dbReference>
<dbReference type="PANTHER" id="PTHR10443:SF14">
    <property type="entry name" value="DIPEPTIDASE 3"/>
    <property type="match status" value="1"/>
</dbReference>
<dbReference type="PANTHER" id="PTHR10443">
    <property type="entry name" value="MICROSOMAL DIPEPTIDASE"/>
    <property type="match status" value="1"/>
</dbReference>
<dbReference type="Pfam" id="PF01244">
    <property type="entry name" value="Peptidase_M19"/>
    <property type="match status" value="1"/>
</dbReference>
<dbReference type="SUPFAM" id="SSF51556">
    <property type="entry name" value="Metallo-dependent hydrolases"/>
    <property type="match status" value="1"/>
</dbReference>
<dbReference type="PROSITE" id="PS00869">
    <property type="entry name" value="RENAL_DIPEPTIDASE_1"/>
    <property type="match status" value="1"/>
</dbReference>
<dbReference type="PROSITE" id="PS51365">
    <property type="entry name" value="RENAL_DIPEPTIDASE_2"/>
    <property type="match status" value="1"/>
</dbReference>